<dbReference type="EC" id="2.1.1.57"/>
<dbReference type="EMBL" id="X67119">
    <property type="protein sequence ID" value="CAA47579.1"/>
    <property type="molecule type" value="Genomic_DNA"/>
</dbReference>
<dbReference type="EMBL" id="S55844">
    <property type="protein sequence ID" value="AAB24676.2"/>
    <property type="molecule type" value="Genomic_DNA"/>
</dbReference>
<dbReference type="EMBL" id="X69198">
    <property type="protein sequence ID" value="CAA49021.1"/>
    <property type="molecule type" value="Genomic_DNA"/>
</dbReference>
<dbReference type="PIR" id="E36845">
    <property type="entry name" value="E36845"/>
</dbReference>
<dbReference type="RefSeq" id="NP_042124.1">
    <property type="nucleotide sequence ID" value="NC_001611.1"/>
</dbReference>
<dbReference type="SMR" id="P33052"/>
<dbReference type="GeneID" id="1486466"/>
<dbReference type="KEGG" id="vg:1486466"/>
<dbReference type="Proteomes" id="UP000002060">
    <property type="component" value="Segment"/>
</dbReference>
<dbReference type="GO" id="GO:0044423">
    <property type="term" value="C:virion component"/>
    <property type="evidence" value="ECO:0007669"/>
    <property type="project" value="UniProtKB-KW"/>
</dbReference>
<dbReference type="GO" id="GO:0004483">
    <property type="term" value="F:mRNA (nucleoside-2'-O-)-methyltransferase activity"/>
    <property type="evidence" value="ECO:0007669"/>
    <property type="project" value="UniProtKB-EC"/>
</dbReference>
<dbReference type="GO" id="GO:0006370">
    <property type="term" value="P:7-methylguanosine mRNA capping"/>
    <property type="evidence" value="ECO:0007669"/>
    <property type="project" value="UniProtKB-KW"/>
</dbReference>
<dbReference type="GO" id="GO:0032259">
    <property type="term" value="P:methylation"/>
    <property type="evidence" value="ECO:0007669"/>
    <property type="project" value="UniProtKB-KW"/>
</dbReference>
<dbReference type="GO" id="GO:0031440">
    <property type="term" value="P:regulation of mRNA 3'-end processing"/>
    <property type="evidence" value="ECO:0007669"/>
    <property type="project" value="InterPro"/>
</dbReference>
<dbReference type="CDD" id="cd20756">
    <property type="entry name" value="capping_2-OMTase_Poxviridae"/>
    <property type="match status" value="1"/>
</dbReference>
<dbReference type="Gene3D" id="3.40.50.150">
    <property type="entry name" value="Vaccinia Virus protein VP39"/>
    <property type="match status" value="1"/>
</dbReference>
<dbReference type="InterPro" id="IPR000176">
    <property type="entry name" value="mRNA_MeTrfase-like"/>
</dbReference>
<dbReference type="InterPro" id="IPR025804">
    <property type="entry name" value="Pox/kineto_cap_MeTfrase"/>
</dbReference>
<dbReference type="InterPro" id="IPR030375">
    <property type="entry name" value="Poxvir_cap_MeTfrase"/>
</dbReference>
<dbReference type="InterPro" id="IPR029063">
    <property type="entry name" value="SAM-dependent_MTases_sf"/>
</dbReference>
<dbReference type="Pfam" id="PF01358">
    <property type="entry name" value="PARP_regulatory"/>
    <property type="match status" value="1"/>
</dbReference>
<dbReference type="PIRSF" id="PIRSF003726">
    <property type="entry name" value="PolA_polym_reg_poxV"/>
    <property type="match status" value="1"/>
</dbReference>
<dbReference type="SUPFAM" id="SSF53335">
    <property type="entry name" value="S-adenosyl-L-methionine-dependent methyltransferases"/>
    <property type="match status" value="1"/>
</dbReference>
<dbReference type="PROSITE" id="PS51612">
    <property type="entry name" value="SAM_MT_2O_PK"/>
    <property type="match status" value="1"/>
</dbReference>
<comment type="function">
    <text evidence="2">Displays methyltransferase, positive regulation of the poly(A) polymerase and transcription elongation activities. Involved in the modification of both mRNA ends and in intermediate and late gene positive transcription elongation. At the mRNAs 5' end, methylates the ribose 2' OH group of the first transcribed nucleotide, thereby producing a 2'-O-methylpurine cap. At the 3' end, functions as a processivity factor which stimulates the activity of the viral poly(A) polymerase OPG063 that creates mRNA's poly(A) tail. In the presence of OPG102, OPG063 does not dissociate from the RNA allowing tail elongation to around 250 adenylates.</text>
</comment>
<comment type="catalytic activity">
    <reaction evidence="2">
        <text>a 5'-end (N(7)-methyl 5'-triphosphoguanosine)-ribonucleoside in mRNA + S-adenosyl-L-methionine = a 5'-end (N(7)-methyl 5'-triphosphoguanosine)-(2'-O-methyl-ribonucleoside) in mRNA + S-adenosyl-L-homocysteine + H(+)</text>
        <dbReference type="Rhea" id="RHEA:67020"/>
        <dbReference type="Rhea" id="RHEA-COMP:17167"/>
        <dbReference type="Rhea" id="RHEA-COMP:17168"/>
        <dbReference type="ChEBI" id="CHEBI:15378"/>
        <dbReference type="ChEBI" id="CHEBI:57856"/>
        <dbReference type="ChEBI" id="CHEBI:59789"/>
        <dbReference type="ChEBI" id="CHEBI:156461"/>
        <dbReference type="ChEBI" id="CHEBI:167609"/>
        <dbReference type="EC" id="2.1.1.57"/>
    </reaction>
</comment>
<comment type="subunit">
    <text evidence="2">Interacts with poly(A) polymerase catalytic subunit OPG063. Interacts with OPG109 and OPG123; these interactions might help linking transcription to capping and polyadenylation.</text>
</comment>
<comment type="subcellular location">
    <subcellularLocation>
        <location evidence="2">Virion</location>
    </subcellularLocation>
    <text evidence="2">Localizes to the virion core.</text>
</comment>
<comment type="similarity">
    <text evidence="3">Belongs to the class I-like SAM-binding methyltransferase superfamily. Poxvirus/kinetoplastid 2'-O-MTase family.</text>
</comment>
<organismHost>
    <name type="scientific">Homo sapiens</name>
    <name type="common">Human</name>
    <dbReference type="NCBI Taxonomy" id="9606"/>
</organismHost>
<organism>
    <name type="scientific">Variola virus (isolate Human/India/Ind3/1967)</name>
    <name type="common">VARV</name>
    <name type="synonym">Smallpox virus</name>
    <dbReference type="NCBI Taxonomy" id="587200"/>
    <lineage>
        <taxon>Viruses</taxon>
        <taxon>Varidnaviria</taxon>
        <taxon>Bamfordvirae</taxon>
        <taxon>Nucleocytoviricota</taxon>
        <taxon>Pokkesviricetes</taxon>
        <taxon>Chitovirales</taxon>
        <taxon>Poxviridae</taxon>
        <taxon>Chordopoxvirinae</taxon>
        <taxon>Orthopoxvirus</taxon>
        <taxon>Variola virus</taxon>
    </lineage>
</organism>
<sequence length="333" mass="38868">MDVVSLDKPFMYFEEIDNELDYEPESANEVAKKLPYQGQLKLLLGELFFLSKLQRHGILDGATVVYIGSAPGTHIRYLRDHFYNLGVIIKWMLIDGRHHDPILNGLRDVTLVTRFVDEEYLRSIKKQLHPSKIILISDVRSKRGGNEPSTEDLLSNYALQNVMISILNPVASSLKWRCPFPDQWIKDFYIPHGNKMSQPFAPSYSAEMRLLSIYTGENMRLTRVTKSDAVNYEKKMYYLNKIVRNKVVVNFDYPNQEYDYFHMYFMLRTVYCNKTFPTTKAKVLFLQQSIFRFLNIPTTSTEKVSHEPIQCKVSSKDSVYKNRNSKRSVRGNK</sequence>
<reference key="1">
    <citation type="journal article" date="1993" name="Virus Res.">
        <title>Nucleotide sequence analysis of variola virus HindIII M, L, I genome fragments.</title>
        <authorList>
            <person name="Shchelkunov S.N."/>
            <person name="Blinov V.M."/>
            <person name="Totmenin A.V."/>
            <person name="Marennikova S.S."/>
            <person name="Kolykhalov A.A."/>
            <person name="Frolov I.V."/>
            <person name="Chizhikov V.E."/>
            <person name="Gytorov V.V."/>
            <person name="Gashikov P.V."/>
            <person name="Belanov E.F."/>
            <person name="Belavin P.A."/>
            <person name="Resenchuk S.M."/>
            <person name="Andzhaparidze O.G."/>
            <person name="Sandakhchiev L.S."/>
        </authorList>
    </citation>
    <scope>NUCLEOTIDE SEQUENCE [GENOMIC DNA]</scope>
</reference>
<reference key="2">
    <citation type="journal article" date="1993" name="FEBS Lett.">
        <title>Genes of variola and vaccinia viruses necessary to overcome the host protective mechanisms.</title>
        <authorList>
            <person name="Shchelkunov S.N."/>
            <person name="Blinov V.M."/>
            <person name="Sandakhchiev L.S."/>
        </authorList>
    </citation>
    <scope>NUCLEOTIDE SEQUENCE [LARGE SCALE GENOMIC DNA]</scope>
</reference>
<accession>P33052</accession>
<keyword id="KW-0251">Elongation factor</keyword>
<keyword id="KW-0489">Methyltransferase</keyword>
<keyword id="KW-0506">mRNA capping</keyword>
<keyword id="KW-0507">mRNA processing</keyword>
<keyword id="KW-0648">Protein biosynthesis</keyword>
<keyword id="KW-1185">Reference proteome</keyword>
<keyword id="KW-0949">S-adenosyl-L-methionine</keyword>
<keyword id="KW-0804">Transcription</keyword>
<keyword id="KW-0808">Transferase</keyword>
<keyword id="KW-0946">Virion</keyword>
<protein>
    <recommendedName>
        <fullName>Cap-specific mRNA (nucleoside-2'-O-)-methyltransferase</fullName>
        <ecNumber>2.1.1.57</ecNumber>
    </recommendedName>
    <alternativeName>
        <fullName>Poly(A) polymerase regulatory subunit</fullName>
    </alternativeName>
    <alternativeName>
        <fullName>Poly(A) polymerase small subunit</fullName>
        <shortName>PAP-S</shortName>
    </alternativeName>
    <alternativeName>
        <fullName>VP39</fullName>
    </alternativeName>
</protein>
<evidence type="ECO:0000250" key="1"/>
<evidence type="ECO:0000250" key="2">
    <source>
        <dbReference type="UniProtKB" id="P07617"/>
    </source>
</evidence>
<evidence type="ECO:0000255" key="3">
    <source>
        <dbReference type="PROSITE-ProRule" id="PRU00944"/>
    </source>
</evidence>
<proteinExistence type="inferred from homology"/>
<name>MCE_VAR67</name>
<feature type="chain" id="PRO_0000099113" description="Cap-specific mRNA (nucleoside-2'-O-)-methyltransferase">
    <location>
        <begin position="1"/>
        <end position="333"/>
    </location>
</feature>
<feature type="region of interest" description="Binding to Rap94" evidence="1">
    <location>
        <begin position="169"/>
        <end position="333"/>
    </location>
</feature>
<feature type="region of interest" description="Binding to NPH-I" evidence="3">
    <location>
        <begin position="169"/>
        <end position="249"/>
    </location>
</feature>
<feature type="active site" description="For methyltransferase activity" evidence="3">
    <location>
        <position position="175"/>
    </location>
</feature>
<feature type="binding site" evidence="3">
    <location>
        <position position="22"/>
    </location>
    <ligand>
        <name>mRNA</name>
        <dbReference type="ChEBI" id="CHEBI:33699"/>
    </ligand>
    <ligandPart>
        <name>mRNA cap</name>
    </ligandPart>
</feature>
<feature type="binding site" evidence="3">
    <location>
        <position position="39"/>
    </location>
    <ligand>
        <name>S-adenosyl-L-methionine</name>
        <dbReference type="ChEBI" id="CHEBI:59789"/>
    </ligand>
</feature>
<feature type="binding site" evidence="3">
    <location>
        <position position="66"/>
    </location>
    <ligand>
        <name>S-adenosyl-L-methionine</name>
        <dbReference type="ChEBI" id="CHEBI:59789"/>
    </ligand>
</feature>
<feature type="binding site" evidence="3">
    <location>
        <position position="68"/>
    </location>
    <ligand>
        <name>S-adenosyl-L-methionine</name>
        <dbReference type="ChEBI" id="CHEBI:59789"/>
    </ligand>
</feature>
<feature type="binding site" evidence="3">
    <location>
        <position position="72"/>
    </location>
    <ligand>
        <name>S-adenosyl-L-methionine</name>
        <dbReference type="ChEBI" id="CHEBI:59789"/>
    </ligand>
</feature>
<feature type="binding site" evidence="3">
    <location>
        <position position="95"/>
    </location>
    <ligand>
        <name>S-adenosyl-L-methionine</name>
        <dbReference type="ChEBI" id="CHEBI:59789"/>
    </ligand>
</feature>
<feature type="binding site" evidence="3">
    <location>
        <position position="97"/>
    </location>
    <ligand>
        <name>S-adenosyl-L-methionine</name>
        <dbReference type="ChEBI" id="CHEBI:59789"/>
    </ligand>
</feature>
<feature type="binding site" evidence="3">
    <location>
        <position position="116"/>
    </location>
    <ligand>
        <name>S-adenosyl-L-methionine</name>
        <dbReference type="ChEBI" id="CHEBI:59789"/>
    </ligand>
</feature>
<feature type="binding site" evidence="3">
    <location>
        <position position="138"/>
    </location>
    <ligand>
        <name>S-adenosyl-L-methionine</name>
        <dbReference type="ChEBI" id="CHEBI:59789"/>
    </ligand>
</feature>
<feature type="binding site" evidence="3">
    <location>
        <begin position="177"/>
        <end position="180"/>
    </location>
    <ligand>
        <name>mRNA</name>
        <dbReference type="ChEBI" id="CHEBI:33699"/>
    </ligand>
    <ligandPart>
        <name>mRNA cap</name>
    </ligandPart>
</feature>
<feature type="binding site" evidence="3">
    <location>
        <position position="182"/>
    </location>
    <ligand>
        <name>mRNA</name>
        <dbReference type="ChEBI" id="CHEBI:33699"/>
    </ligand>
    <ligandPart>
        <name>mRNA cap</name>
    </ligandPart>
</feature>
<feature type="binding site" evidence="3">
    <location>
        <begin position="205"/>
        <end position="207"/>
    </location>
    <ligand>
        <name>mRNA</name>
        <dbReference type="ChEBI" id="CHEBI:33699"/>
    </ligand>
    <ligandPart>
        <name>mRNA cap</name>
    </ligandPart>
</feature>
<feature type="binding site" evidence="3">
    <location>
        <position position="233"/>
    </location>
    <ligand>
        <name>mRNA</name>
        <dbReference type="ChEBI" id="CHEBI:33699"/>
    </ligand>
    <ligandPart>
        <name>mRNA cap</name>
    </ligandPart>
</feature>
<gene>
    <name type="primary">OPG102</name>
    <name type="synonym">PAPS</name>
    <name type="ORF">J3R</name>
    <name type="ORF">L3R</name>
</gene>